<gene>
    <name type="primary">ftz</name>
</gene>
<feature type="chain" id="PRO_0000049061" description="Segmentation protein fushi tarazu">
    <location>
        <begin position="1"/>
        <end position="456"/>
    </location>
</feature>
<feature type="DNA-binding region" description="Homeobox" evidence="2">
    <location>
        <begin position="283"/>
        <end position="342"/>
    </location>
</feature>
<feature type="region of interest" description="Disordered" evidence="3">
    <location>
        <begin position="338"/>
        <end position="380"/>
    </location>
</feature>
<feature type="region of interest" description="Disordered" evidence="3">
    <location>
        <begin position="400"/>
        <end position="456"/>
    </location>
</feature>
<feature type="compositionally biased region" description="Low complexity" evidence="3">
    <location>
        <begin position="421"/>
        <end position="443"/>
    </location>
</feature>
<feature type="compositionally biased region" description="Polar residues" evidence="3">
    <location>
        <begin position="444"/>
        <end position="456"/>
    </location>
</feature>
<comment type="function">
    <text evidence="1">May play a role in determining neuronal identity, may be directly involved in specifying identity of individual neurons. Required during embryogenesis for the process of body segmentation. Homeotic protein, required in alternating segment primordia, it specifies the correct number of segments (By similarity).</text>
</comment>
<comment type="subcellular location">
    <subcellularLocation>
        <location>Nucleus</location>
    </subcellularLocation>
</comment>
<comment type="miscellaneous">
    <text>'Fushi tarazu' means 'segment deficient' in Japanese.</text>
</comment>
<comment type="similarity">
    <text evidence="4">Belongs to the Antp homeobox family.</text>
</comment>
<name>FTZ_DROHY</name>
<proteinExistence type="inferred from homology"/>
<organism>
    <name type="scientific">Drosophila hydei</name>
    <name type="common">Fruit fly</name>
    <dbReference type="NCBI Taxonomy" id="7224"/>
    <lineage>
        <taxon>Eukaryota</taxon>
        <taxon>Metazoa</taxon>
        <taxon>Ecdysozoa</taxon>
        <taxon>Arthropoda</taxon>
        <taxon>Hexapoda</taxon>
        <taxon>Insecta</taxon>
        <taxon>Pterygota</taxon>
        <taxon>Neoptera</taxon>
        <taxon>Endopterygota</taxon>
        <taxon>Diptera</taxon>
        <taxon>Brachycera</taxon>
        <taxon>Muscomorpha</taxon>
        <taxon>Ephydroidea</taxon>
        <taxon>Drosophilidae</taxon>
        <taxon>Drosophila</taxon>
    </lineage>
</organism>
<reference key="1">
    <citation type="submission" date="1994-05" db="EMBL/GenBank/DDBJ databases">
        <authorList>
            <person name="Jost W."/>
            <person name="Yu Y."/>
            <person name="Pick L."/>
            <person name="Preiss A."/>
            <person name="Maier D."/>
        </authorList>
    </citation>
    <scope>NUCLEOTIDE SEQUENCE [GENOMIC DNA]</scope>
</reference>
<keyword id="KW-0217">Developmental protein</keyword>
<keyword id="KW-0238">DNA-binding</keyword>
<keyword id="KW-0371">Homeobox</keyword>
<keyword id="KW-0539">Nucleus</keyword>
<keyword id="KW-0562">Pair-rule protein</keyword>
<keyword id="KW-0597">Phosphoprotein</keyword>
<keyword id="KW-0804">Transcription</keyword>
<keyword id="KW-0805">Transcription regulation</keyword>
<dbReference type="EMBL" id="X79494">
    <property type="protein sequence ID" value="CAA56039.1"/>
    <property type="molecule type" value="Genomic_DNA"/>
</dbReference>
<dbReference type="PIR" id="S45137">
    <property type="entry name" value="S45137"/>
</dbReference>
<dbReference type="SMR" id="P48590"/>
<dbReference type="FlyBase" id="FBgn0012391">
    <property type="gene designation" value="Dhyd\ftz"/>
</dbReference>
<dbReference type="OrthoDB" id="6159439at2759"/>
<dbReference type="Proteomes" id="UP000504633">
    <property type="component" value="Unplaced"/>
</dbReference>
<dbReference type="GO" id="GO:0005634">
    <property type="term" value="C:nucleus"/>
    <property type="evidence" value="ECO:0007669"/>
    <property type="project" value="UniProtKB-SubCell"/>
</dbReference>
<dbReference type="GO" id="GO:0000981">
    <property type="term" value="F:DNA-binding transcription factor activity, RNA polymerase II-specific"/>
    <property type="evidence" value="ECO:0007669"/>
    <property type="project" value="InterPro"/>
</dbReference>
<dbReference type="GO" id="GO:0000978">
    <property type="term" value="F:RNA polymerase II cis-regulatory region sequence-specific DNA binding"/>
    <property type="evidence" value="ECO:0007669"/>
    <property type="project" value="TreeGrafter"/>
</dbReference>
<dbReference type="GO" id="GO:0000122">
    <property type="term" value="P:negative regulation of transcription by RNA polymerase II"/>
    <property type="evidence" value="ECO:0007669"/>
    <property type="project" value="TreeGrafter"/>
</dbReference>
<dbReference type="GO" id="GO:0007366">
    <property type="term" value="P:periodic partitioning by pair rule gene"/>
    <property type="evidence" value="ECO:0007669"/>
    <property type="project" value="UniProtKB-KW"/>
</dbReference>
<dbReference type="CDD" id="cd00086">
    <property type="entry name" value="homeodomain"/>
    <property type="match status" value="1"/>
</dbReference>
<dbReference type="Gene3D" id="1.10.10.60">
    <property type="entry name" value="Homeodomain-like"/>
    <property type="match status" value="1"/>
</dbReference>
<dbReference type="InterPro" id="IPR050296">
    <property type="entry name" value="Antp_homeobox"/>
</dbReference>
<dbReference type="InterPro" id="IPR005567">
    <property type="entry name" value="FTZ_N"/>
</dbReference>
<dbReference type="InterPro" id="IPR001356">
    <property type="entry name" value="HD"/>
</dbReference>
<dbReference type="InterPro" id="IPR020479">
    <property type="entry name" value="HD_metazoa"/>
</dbReference>
<dbReference type="InterPro" id="IPR017970">
    <property type="entry name" value="Homeobox_CS"/>
</dbReference>
<dbReference type="InterPro" id="IPR009057">
    <property type="entry name" value="Homeodomain-like_sf"/>
</dbReference>
<dbReference type="PANTHER" id="PTHR45659">
    <property type="entry name" value="HOMEOBOX PROTEIN HOX"/>
    <property type="match status" value="1"/>
</dbReference>
<dbReference type="PANTHER" id="PTHR45659:SF22">
    <property type="entry name" value="HOMEOTIC PROTEIN ANTENNAPEDIA-RELATED"/>
    <property type="match status" value="1"/>
</dbReference>
<dbReference type="Pfam" id="PF03867">
    <property type="entry name" value="FTZ"/>
    <property type="match status" value="1"/>
</dbReference>
<dbReference type="Pfam" id="PF00046">
    <property type="entry name" value="Homeodomain"/>
    <property type="match status" value="1"/>
</dbReference>
<dbReference type="PRINTS" id="PR00024">
    <property type="entry name" value="HOMEOBOX"/>
</dbReference>
<dbReference type="SMART" id="SM00389">
    <property type="entry name" value="HOX"/>
    <property type="match status" value="1"/>
</dbReference>
<dbReference type="SUPFAM" id="SSF46689">
    <property type="entry name" value="Homeodomain-like"/>
    <property type="match status" value="1"/>
</dbReference>
<dbReference type="PROSITE" id="PS00027">
    <property type="entry name" value="HOMEOBOX_1"/>
    <property type="match status" value="1"/>
</dbReference>
<dbReference type="PROSITE" id="PS50071">
    <property type="entry name" value="HOMEOBOX_2"/>
    <property type="match status" value="1"/>
</dbReference>
<evidence type="ECO:0000250" key="1"/>
<evidence type="ECO:0000255" key="2">
    <source>
        <dbReference type="PROSITE-ProRule" id="PRU00108"/>
    </source>
</evidence>
<evidence type="ECO:0000256" key="3">
    <source>
        <dbReference type="SAM" id="MobiDB-lite"/>
    </source>
</evidence>
<evidence type="ECO:0000305" key="4"/>
<protein>
    <recommendedName>
        <fullName>Segmentation protein fushi tarazu</fullName>
    </recommendedName>
</protein>
<accession>P48590</accession>
<sequence>MAATNTHYYADSMYNMYHHALPPTYYDNTSSSSSYYQSSQGWQPASYQGSSYAHYSQESYSESCYYANYHHQQQQQQHQDQPLCLPTLDAVPQYQVPTIAEPVIETSSPAPVKSRKRKAEESAADIIAAVEERPSTLRALLTNPVKKLKYTPDYFYTTIEHVKKPSKSSSAGELSPCYEQDYAVPTPSTQQTHMSPQRSTGEDVDYLDVYSPRKQAKHGDFITPPPAATTPVDGIGITISTPPQSPAEKSNEINHRIVTAANSSNEFNWSHIEETIASDCKDSKRTRQTYSRYQTLELEKEFHFNRYITRRRRMDIAHALNLSERQIKIWFQNRRMKSKKDRTLEASPDHCTTTGYASLLPPLDATAMPPQTQPQPQPHLQPAAAMPYAAYPAYLPATQQSYDYPQQSPPPPHFAQPYDAQYTPQYHQQTQQQCSYQQQQQQQELNTSNQALYHLP</sequence>